<dbReference type="EC" id="6.1.1.3" evidence="1"/>
<dbReference type="EMBL" id="AM180252">
    <property type="protein sequence ID" value="CAJ54268.1"/>
    <property type="molecule type" value="Genomic_DNA"/>
</dbReference>
<dbReference type="SMR" id="Q1MRV8"/>
<dbReference type="STRING" id="363253.LI0212"/>
<dbReference type="KEGG" id="lip:LI0212"/>
<dbReference type="eggNOG" id="COG0441">
    <property type="taxonomic scope" value="Bacteria"/>
</dbReference>
<dbReference type="HOGENOM" id="CLU_008554_0_1_7"/>
<dbReference type="OrthoDB" id="9802304at2"/>
<dbReference type="Proteomes" id="UP000002430">
    <property type="component" value="Chromosome"/>
</dbReference>
<dbReference type="GO" id="GO:0005737">
    <property type="term" value="C:cytoplasm"/>
    <property type="evidence" value="ECO:0007669"/>
    <property type="project" value="UniProtKB-SubCell"/>
</dbReference>
<dbReference type="GO" id="GO:0005524">
    <property type="term" value="F:ATP binding"/>
    <property type="evidence" value="ECO:0007669"/>
    <property type="project" value="UniProtKB-UniRule"/>
</dbReference>
<dbReference type="GO" id="GO:0046872">
    <property type="term" value="F:metal ion binding"/>
    <property type="evidence" value="ECO:0007669"/>
    <property type="project" value="UniProtKB-KW"/>
</dbReference>
<dbReference type="GO" id="GO:0004829">
    <property type="term" value="F:threonine-tRNA ligase activity"/>
    <property type="evidence" value="ECO:0007669"/>
    <property type="project" value="UniProtKB-UniRule"/>
</dbReference>
<dbReference type="GO" id="GO:0000049">
    <property type="term" value="F:tRNA binding"/>
    <property type="evidence" value="ECO:0007669"/>
    <property type="project" value="UniProtKB-KW"/>
</dbReference>
<dbReference type="GO" id="GO:0006435">
    <property type="term" value="P:threonyl-tRNA aminoacylation"/>
    <property type="evidence" value="ECO:0007669"/>
    <property type="project" value="UniProtKB-UniRule"/>
</dbReference>
<dbReference type="CDD" id="cd00860">
    <property type="entry name" value="ThrRS_anticodon"/>
    <property type="match status" value="1"/>
</dbReference>
<dbReference type="CDD" id="cd00771">
    <property type="entry name" value="ThrRS_core"/>
    <property type="match status" value="1"/>
</dbReference>
<dbReference type="FunFam" id="3.30.54.20:FF:000002">
    <property type="entry name" value="Threonine--tRNA ligase"/>
    <property type="match status" value="1"/>
</dbReference>
<dbReference type="FunFam" id="3.30.930.10:FF:000019">
    <property type="entry name" value="Threonine--tRNA ligase"/>
    <property type="match status" value="1"/>
</dbReference>
<dbReference type="FunFam" id="3.40.50.800:FF:000001">
    <property type="entry name" value="Threonine--tRNA ligase"/>
    <property type="match status" value="1"/>
</dbReference>
<dbReference type="FunFam" id="3.30.980.10:FF:000005">
    <property type="entry name" value="Threonyl-tRNA synthetase, mitochondrial"/>
    <property type="match status" value="1"/>
</dbReference>
<dbReference type="Gene3D" id="3.30.54.20">
    <property type="match status" value="1"/>
</dbReference>
<dbReference type="Gene3D" id="3.40.50.800">
    <property type="entry name" value="Anticodon-binding domain"/>
    <property type="match status" value="1"/>
</dbReference>
<dbReference type="Gene3D" id="3.30.930.10">
    <property type="entry name" value="Bira Bifunctional Protein, Domain 2"/>
    <property type="match status" value="1"/>
</dbReference>
<dbReference type="Gene3D" id="3.30.980.10">
    <property type="entry name" value="Threonyl-trna Synthetase, Chain A, domain 2"/>
    <property type="match status" value="1"/>
</dbReference>
<dbReference type="HAMAP" id="MF_00184">
    <property type="entry name" value="Thr_tRNA_synth"/>
    <property type="match status" value="1"/>
</dbReference>
<dbReference type="InterPro" id="IPR002314">
    <property type="entry name" value="aa-tRNA-synt_IIb"/>
</dbReference>
<dbReference type="InterPro" id="IPR006195">
    <property type="entry name" value="aa-tRNA-synth_II"/>
</dbReference>
<dbReference type="InterPro" id="IPR045864">
    <property type="entry name" value="aa-tRNA-synth_II/BPL/LPL"/>
</dbReference>
<dbReference type="InterPro" id="IPR004154">
    <property type="entry name" value="Anticodon-bd"/>
</dbReference>
<dbReference type="InterPro" id="IPR036621">
    <property type="entry name" value="Anticodon-bd_dom_sf"/>
</dbReference>
<dbReference type="InterPro" id="IPR002320">
    <property type="entry name" value="Thr-tRNA-ligase_IIa"/>
</dbReference>
<dbReference type="InterPro" id="IPR018163">
    <property type="entry name" value="Thr/Ala-tRNA-synth_IIc_edit"/>
</dbReference>
<dbReference type="InterPro" id="IPR047246">
    <property type="entry name" value="ThrRS_anticodon"/>
</dbReference>
<dbReference type="InterPro" id="IPR033728">
    <property type="entry name" value="ThrRS_core"/>
</dbReference>
<dbReference type="InterPro" id="IPR012947">
    <property type="entry name" value="tRNA_SAD"/>
</dbReference>
<dbReference type="NCBIfam" id="TIGR00418">
    <property type="entry name" value="thrS"/>
    <property type="match status" value="1"/>
</dbReference>
<dbReference type="PANTHER" id="PTHR11451:SF44">
    <property type="entry name" value="THREONINE--TRNA LIGASE, CHLOROPLASTIC_MITOCHONDRIAL 2"/>
    <property type="match status" value="1"/>
</dbReference>
<dbReference type="PANTHER" id="PTHR11451">
    <property type="entry name" value="THREONINE-TRNA LIGASE"/>
    <property type="match status" value="1"/>
</dbReference>
<dbReference type="Pfam" id="PF03129">
    <property type="entry name" value="HGTP_anticodon"/>
    <property type="match status" value="1"/>
</dbReference>
<dbReference type="Pfam" id="PF00587">
    <property type="entry name" value="tRNA-synt_2b"/>
    <property type="match status" value="1"/>
</dbReference>
<dbReference type="Pfam" id="PF07973">
    <property type="entry name" value="tRNA_SAD"/>
    <property type="match status" value="1"/>
</dbReference>
<dbReference type="PRINTS" id="PR01047">
    <property type="entry name" value="TRNASYNTHTHR"/>
</dbReference>
<dbReference type="SMART" id="SM00863">
    <property type="entry name" value="tRNA_SAD"/>
    <property type="match status" value="1"/>
</dbReference>
<dbReference type="SUPFAM" id="SSF52954">
    <property type="entry name" value="Class II aaRS ABD-related"/>
    <property type="match status" value="1"/>
</dbReference>
<dbReference type="SUPFAM" id="SSF55681">
    <property type="entry name" value="Class II aaRS and biotin synthetases"/>
    <property type="match status" value="1"/>
</dbReference>
<dbReference type="SUPFAM" id="SSF55186">
    <property type="entry name" value="ThrRS/AlaRS common domain"/>
    <property type="match status" value="1"/>
</dbReference>
<dbReference type="PROSITE" id="PS50862">
    <property type="entry name" value="AA_TRNA_LIGASE_II"/>
    <property type="match status" value="1"/>
</dbReference>
<accession>Q1MRV8</accession>
<protein>
    <recommendedName>
        <fullName evidence="1">Threonine--tRNA ligase</fullName>
        <ecNumber evidence="1">6.1.1.3</ecNumber>
    </recommendedName>
    <alternativeName>
        <fullName evidence="1">Threonyl-tRNA synthetase</fullName>
        <shortName evidence="1">ThrRS</shortName>
    </alternativeName>
</protein>
<comment type="function">
    <text evidence="1">Catalyzes the attachment of threonine to tRNA(Thr) in a two-step reaction: L-threonine is first activated by ATP to form Thr-AMP and then transferred to the acceptor end of tRNA(Thr). Also edits incorrectly charged L-seryl-tRNA(Thr).</text>
</comment>
<comment type="catalytic activity">
    <reaction evidence="1">
        <text>tRNA(Thr) + L-threonine + ATP = L-threonyl-tRNA(Thr) + AMP + diphosphate + H(+)</text>
        <dbReference type="Rhea" id="RHEA:24624"/>
        <dbReference type="Rhea" id="RHEA-COMP:9670"/>
        <dbReference type="Rhea" id="RHEA-COMP:9704"/>
        <dbReference type="ChEBI" id="CHEBI:15378"/>
        <dbReference type="ChEBI" id="CHEBI:30616"/>
        <dbReference type="ChEBI" id="CHEBI:33019"/>
        <dbReference type="ChEBI" id="CHEBI:57926"/>
        <dbReference type="ChEBI" id="CHEBI:78442"/>
        <dbReference type="ChEBI" id="CHEBI:78534"/>
        <dbReference type="ChEBI" id="CHEBI:456215"/>
        <dbReference type="EC" id="6.1.1.3"/>
    </reaction>
</comment>
<comment type="cofactor">
    <cofactor evidence="1">
        <name>Zn(2+)</name>
        <dbReference type="ChEBI" id="CHEBI:29105"/>
    </cofactor>
    <text evidence="1">Binds 1 zinc ion per subunit.</text>
</comment>
<comment type="subunit">
    <text evidence="1">Homodimer.</text>
</comment>
<comment type="subcellular location">
    <subcellularLocation>
        <location evidence="1">Cytoplasm</location>
    </subcellularLocation>
</comment>
<comment type="similarity">
    <text evidence="1">Belongs to the class-II aminoacyl-tRNA synthetase family.</text>
</comment>
<proteinExistence type="inferred from homology"/>
<feature type="chain" id="PRO_1000058427" description="Threonine--tRNA ligase">
    <location>
        <begin position="1"/>
        <end position="642"/>
    </location>
</feature>
<feature type="region of interest" description="Catalytic" evidence="1">
    <location>
        <begin position="239"/>
        <end position="530"/>
    </location>
</feature>
<feature type="binding site" evidence="1">
    <location>
        <position position="331"/>
    </location>
    <ligand>
        <name>Zn(2+)</name>
        <dbReference type="ChEBI" id="CHEBI:29105"/>
    </ligand>
</feature>
<feature type="binding site" evidence="1">
    <location>
        <position position="382"/>
    </location>
    <ligand>
        <name>Zn(2+)</name>
        <dbReference type="ChEBI" id="CHEBI:29105"/>
    </ligand>
</feature>
<feature type="binding site" evidence="1">
    <location>
        <position position="507"/>
    </location>
    <ligand>
        <name>Zn(2+)</name>
        <dbReference type="ChEBI" id="CHEBI:29105"/>
    </ligand>
</feature>
<evidence type="ECO:0000255" key="1">
    <source>
        <dbReference type="HAMAP-Rule" id="MF_00184"/>
    </source>
</evidence>
<gene>
    <name evidence="1" type="primary">thrS</name>
    <name type="ordered locus">LI0212</name>
</gene>
<keyword id="KW-0030">Aminoacyl-tRNA synthetase</keyword>
<keyword id="KW-0067">ATP-binding</keyword>
<keyword id="KW-0963">Cytoplasm</keyword>
<keyword id="KW-0436">Ligase</keyword>
<keyword id="KW-0479">Metal-binding</keyword>
<keyword id="KW-0547">Nucleotide-binding</keyword>
<keyword id="KW-0648">Protein biosynthesis</keyword>
<keyword id="KW-1185">Reference proteome</keyword>
<keyword id="KW-0694">RNA-binding</keyword>
<keyword id="KW-0820">tRNA-binding</keyword>
<keyword id="KW-0862">Zinc</keyword>
<name>SYT_LAWIP</name>
<reference key="1">
    <citation type="submission" date="2005-11" db="EMBL/GenBank/DDBJ databases">
        <title>The complete genome sequence of Lawsonia intracellularis: the causative agent of proliferative enteropathy.</title>
        <authorList>
            <person name="Kaur K."/>
            <person name="Zhang Q."/>
            <person name="Beckler D."/>
            <person name="Munir S."/>
            <person name="Li L."/>
            <person name="Kinsley K."/>
            <person name="Herron L."/>
            <person name="Peterson A."/>
            <person name="May B."/>
            <person name="Singh S."/>
            <person name="Gebhart C."/>
            <person name="Kapur V."/>
        </authorList>
    </citation>
    <scope>NUCLEOTIDE SEQUENCE [LARGE SCALE GENOMIC DNA]</scope>
    <source>
        <strain>PHE/MN1-00</strain>
    </source>
</reference>
<sequence>MQSDINKNHLTMTEGLTYINESGLKEEESKNIVGYNINGSIIDLFTPLPTITKEVIPITIDSEDGLEMLRHSAAHILAAAVKNLFPTVKISIGPSIENGFYYDFDAERPFTPEDFPAIEAEMQRIINESIPFERIEISKAEALEFFSSLHENYKVEIINSLEDGNITLYRIGNFTDLCKGPHVPNTNFIKAFKLLSVAGAYWRGNENNQMLSRIYATAFPNKKLLKTYLTQLEEAKRRDHRKLGKELNLFEFHEDIAPGMVFWQPNGMLLRTILEDFLRKEHLKRGYQLVQGPQLLRRELWEKSGHYTNYKENMYFTEIEEDVYGIKPMNCVSHMLLYKTHLHSYRELPQRYFELGVVHRHEKSGVLHGLLRVRQFTQDDAHIICMPEQLEEEIIQVITFVRDLMSLFDFNYHIVISTRPEKSIGSDYAWELATSALIQAVEKINLPYSINHGDGAFYGPKIDIKVTDAIGREWQLSTIQCDFTLPERFELEYVGQDGKRHQPVMIHRAIFGSIERFIGILTEHYAGAFPTWLTPIQVKILTVTDAQTPFAKHVYSQLQDVGIRVGLDIRNEKLGFKIREAQLAKIPYILVIGQKELELESVNVRLRTGENIGMQSVTEFIKLVENDCIQPFKRGGMNYRFS</sequence>
<organism>
    <name type="scientific">Lawsonia intracellularis (strain PHE/MN1-00)</name>
    <dbReference type="NCBI Taxonomy" id="363253"/>
    <lineage>
        <taxon>Bacteria</taxon>
        <taxon>Pseudomonadati</taxon>
        <taxon>Thermodesulfobacteriota</taxon>
        <taxon>Desulfovibrionia</taxon>
        <taxon>Desulfovibrionales</taxon>
        <taxon>Desulfovibrionaceae</taxon>
        <taxon>Lawsonia</taxon>
    </lineage>
</organism>